<geneLocation type="mitochondrion"/>
<accession>P12778</accession>
<keyword id="KW-0249">Electron transport</keyword>
<keyword id="KW-0349">Heme</keyword>
<keyword id="KW-0408">Iron</keyword>
<keyword id="KW-0472">Membrane</keyword>
<keyword id="KW-0479">Metal-binding</keyword>
<keyword id="KW-0496">Mitochondrion</keyword>
<keyword id="KW-0999">Mitochondrion inner membrane</keyword>
<keyword id="KW-0679">Respiratory chain</keyword>
<keyword id="KW-0812">Transmembrane</keyword>
<keyword id="KW-1133">Transmembrane helix</keyword>
<keyword id="KW-0813">Transport</keyword>
<keyword id="KW-0830">Ubiquinone</keyword>
<gene>
    <name type="primary">MT-CYB</name>
    <name type="synonym">COB</name>
    <name type="synonym">CYTB</name>
    <name type="synonym">MTCYB</name>
</gene>
<dbReference type="EMBL" id="J04815">
    <property type="protein sequence ID" value="AAA68145.1"/>
    <property type="molecule type" value="Genomic_DNA"/>
</dbReference>
<dbReference type="EMBL" id="M16527">
    <property type="protein sequence ID" value="AAA31998.2"/>
    <property type="molecule type" value="Genomic_DNA"/>
</dbReference>
<dbReference type="PIR" id="D34285">
    <property type="entry name" value="D34285"/>
</dbReference>
<dbReference type="RefSeq" id="NP_008133.1">
    <property type="nucleotide sequence ID" value="NC_001572.1"/>
</dbReference>
<dbReference type="SMR" id="P12778"/>
<dbReference type="GeneID" id="807711"/>
<dbReference type="CTD" id="4519"/>
<dbReference type="GO" id="GO:0005743">
    <property type="term" value="C:mitochondrial inner membrane"/>
    <property type="evidence" value="ECO:0007669"/>
    <property type="project" value="UniProtKB-SubCell"/>
</dbReference>
<dbReference type="GO" id="GO:0045275">
    <property type="term" value="C:respiratory chain complex III"/>
    <property type="evidence" value="ECO:0007669"/>
    <property type="project" value="InterPro"/>
</dbReference>
<dbReference type="GO" id="GO:0046872">
    <property type="term" value="F:metal ion binding"/>
    <property type="evidence" value="ECO:0007669"/>
    <property type="project" value="UniProtKB-KW"/>
</dbReference>
<dbReference type="GO" id="GO:0008121">
    <property type="term" value="F:ubiquinol-cytochrome-c reductase activity"/>
    <property type="evidence" value="ECO:0007669"/>
    <property type="project" value="InterPro"/>
</dbReference>
<dbReference type="GO" id="GO:0006122">
    <property type="term" value="P:mitochondrial electron transport, ubiquinol to cytochrome c"/>
    <property type="evidence" value="ECO:0007669"/>
    <property type="project" value="TreeGrafter"/>
</dbReference>
<dbReference type="CDD" id="cd00290">
    <property type="entry name" value="cytochrome_b_C"/>
    <property type="match status" value="1"/>
</dbReference>
<dbReference type="CDD" id="cd00284">
    <property type="entry name" value="Cytochrome_b_N"/>
    <property type="match status" value="1"/>
</dbReference>
<dbReference type="FunFam" id="1.20.810.10:FF:000002">
    <property type="entry name" value="Cytochrome b"/>
    <property type="match status" value="1"/>
</dbReference>
<dbReference type="Gene3D" id="1.20.810.10">
    <property type="entry name" value="Cytochrome Bc1 Complex, Chain C"/>
    <property type="match status" value="1"/>
</dbReference>
<dbReference type="InterPro" id="IPR005798">
    <property type="entry name" value="Cyt_b/b6_C"/>
</dbReference>
<dbReference type="InterPro" id="IPR036150">
    <property type="entry name" value="Cyt_b/b6_C_sf"/>
</dbReference>
<dbReference type="InterPro" id="IPR005797">
    <property type="entry name" value="Cyt_b/b6_N"/>
</dbReference>
<dbReference type="InterPro" id="IPR027387">
    <property type="entry name" value="Cytb/b6-like_sf"/>
</dbReference>
<dbReference type="InterPro" id="IPR030689">
    <property type="entry name" value="Cytochrome_b"/>
</dbReference>
<dbReference type="InterPro" id="IPR048260">
    <property type="entry name" value="Cytochrome_b_C_euk/bac"/>
</dbReference>
<dbReference type="InterPro" id="IPR048259">
    <property type="entry name" value="Cytochrome_b_N_euk/bac"/>
</dbReference>
<dbReference type="InterPro" id="IPR016174">
    <property type="entry name" value="Di-haem_cyt_TM"/>
</dbReference>
<dbReference type="PANTHER" id="PTHR19271">
    <property type="entry name" value="CYTOCHROME B"/>
    <property type="match status" value="1"/>
</dbReference>
<dbReference type="PANTHER" id="PTHR19271:SF16">
    <property type="entry name" value="CYTOCHROME B"/>
    <property type="match status" value="1"/>
</dbReference>
<dbReference type="Pfam" id="PF00032">
    <property type="entry name" value="Cytochrom_B_C"/>
    <property type="match status" value="1"/>
</dbReference>
<dbReference type="Pfam" id="PF00033">
    <property type="entry name" value="Cytochrome_B"/>
    <property type="match status" value="1"/>
</dbReference>
<dbReference type="PIRSF" id="PIRSF038885">
    <property type="entry name" value="COB"/>
    <property type="match status" value="1"/>
</dbReference>
<dbReference type="SUPFAM" id="SSF81648">
    <property type="entry name" value="a domain/subunit of cytochrome bc1 complex (Ubiquinol-cytochrome c reductase)"/>
    <property type="match status" value="1"/>
</dbReference>
<dbReference type="SUPFAM" id="SSF81342">
    <property type="entry name" value="Transmembrane di-heme cytochromes"/>
    <property type="match status" value="1"/>
</dbReference>
<dbReference type="PROSITE" id="PS51003">
    <property type="entry name" value="CYTB_CTER"/>
    <property type="match status" value="1"/>
</dbReference>
<dbReference type="PROSITE" id="PS51002">
    <property type="entry name" value="CYTB_NTER"/>
    <property type="match status" value="1"/>
</dbReference>
<sequence length="380" mass="42339">MLGPLRKEHPIFRILNSTFVDLPLPSNLSIWWNFGSLLGLCLITQILTGLFLAMHYTADISLAFSSASHICRDVNYGWLLRNVHANGASLFFICMYCHIGRGLYYGGSNKIETWNVGVILFLVTVLTAFVGYVLVWGRMSFWAATVIANLVTAVPCVGTTIVQWLWGGFSVDNATLTRFFAFHFLFPFIIAALAIIDLVFLHNSGANNPVGLNSNYDKAPFHIYYTTKDTVGFIALIAALFVLALLFPCALNDPENFIPANPLSHPPHIQPEWYFLFAYAILRSIPNKLGGVIALVAAILVLFLMPLLNTSKNESNSFRPLSQATFWILVATFFVLTWIGSQPVEQPFVLIGQIASLLYFSLFIFGFPLVSSLENKMIFS</sequence>
<reference key="1">
    <citation type="journal article" date="1989" name="J. Biol. Chem.">
        <title>The complete nucleotide sequence, gene organization, and genetic code of the mitochondrial genome of Paracentrotus lividus.</title>
        <authorList>
            <person name="Cantatore P."/>
            <person name="Roberti M."/>
            <person name="Rainaldi G."/>
            <person name="Gadaleta M.N."/>
            <person name="Saccone C."/>
        </authorList>
    </citation>
    <scope>NUCLEOTIDE SEQUENCE [GENOMIC DNA]</scope>
</reference>
<reference key="2">
    <citation type="journal article" date="1987" name="Gene">
        <title>A novel gene order in the Paracentrotus lividus mitochondrial genome.</title>
        <authorList>
            <person name="Cantatore P."/>
            <person name="Roberti M."/>
            <person name="Morisco P."/>
            <person name="Rainaldi G."/>
            <person name="Gadaleta M.N."/>
            <person name="Saccone C."/>
        </authorList>
    </citation>
    <scope>NUCLEOTIDE SEQUENCE [GENOMIC DNA] OF 81-106</scope>
</reference>
<protein>
    <recommendedName>
        <fullName>Cytochrome b</fullName>
    </recommendedName>
    <alternativeName>
        <fullName>Complex III subunit 3</fullName>
    </alternativeName>
    <alternativeName>
        <fullName>Complex III subunit III</fullName>
    </alternativeName>
    <alternativeName>
        <fullName>Cytochrome b-c1 complex subunit 3</fullName>
    </alternativeName>
    <alternativeName>
        <fullName>Ubiquinol-cytochrome-c reductase complex cytochrome b subunit</fullName>
    </alternativeName>
</protein>
<feature type="chain" id="PRO_0000061351" description="Cytochrome b">
    <location>
        <begin position="1"/>
        <end position="380"/>
    </location>
</feature>
<feature type="transmembrane region" description="Helical" evidence="2">
    <location>
        <begin position="34"/>
        <end position="54"/>
    </location>
</feature>
<feature type="transmembrane region" description="Helical" evidence="2">
    <location>
        <begin position="78"/>
        <end position="99"/>
    </location>
</feature>
<feature type="transmembrane region" description="Helical" evidence="2">
    <location>
        <begin position="114"/>
        <end position="134"/>
    </location>
</feature>
<feature type="transmembrane region" description="Helical" evidence="2">
    <location>
        <begin position="179"/>
        <end position="199"/>
    </location>
</feature>
<feature type="transmembrane region" description="Helical" evidence="2">
    <location>
        <begin position="227"/>
        <end position="247"/>
    </location>
</feature>
<feature type="transmembrane region" description="Helical" evidence="2">
    <location>
        <begin position="289"/>
        <end position="309"/>
    </location>
</feature>
<feature type="transmembrane region" description="Helical" evidence="2">
    <location>
        <begin position="321"/>
        <end position="341"/>
    </location>
</feature>
<feature type="transmembrane region" description="Helical" evidence="2">
    <location>
        <begin position="348"/>
        <end position="369"/>
    </location>
</feature>
<feature type="binding site" description="axial binding residue" evidence="2">
    <location>
        <position position="84"/>
    </location>
    <ligand>
        <name>heme b</name>
        <dbReference type="ChEBI" id="CHEBI:60344"/>
        <label>b562</label>
    </ligand>
    <ligandPart>
        <name>Fe</name>
        <dbReference type="ChEBI" id="CHEBI:18248"/>
    </ligandPart>
</feature>
<feature type="binding site" description="axial binding residue" evidence="2">
    <location>
        <position position="98"/>
    </location>
    <ligand>
        <name>heme b</name>
        <dbReference type="ChEBI" id="CHEBI:60344"/>
        <label>b566</label>
    </ligand>
    <ligandPart>
        <name>Fe</name>
        <dbReference type="ChEBI" id="CHEBI:18248"/>
    </ligandPart>
</feature>
<feature type="binding site" description="axial binding residue" evidence="2">
    <location>
        <position position="183"/>
    </location>
    <ligand>
        <name>heme b</name>
        <dbReference type="ChEBI" id="CHEBI:60344"/>
        <label>b562</label>
    </ligand>
    <ligandPart>
        <name>Fe</name>
        <dbReference type="ChEBI" id="CHEBI:18248"/>
    </ligandPart>
</feature>
<feature type="binding site" evidence="2">
    <location>
        <position position="202"/>
    </location>
    <ligand>
        <name>a ubiquinone</name>
        <dbReference type="ChEBI" id="CHEBI:16389"/>
    </ligand>
</feature>
<name>CYB_PARLI</name>
<comment type="function">
    <text evidence="2">Component of the ubiquinol-cytochrome c reductase complex (complex III or cytochrome b-c1 complex) that is part of the mitochondrial respiratory chain. The b-c1 complex mediates electron transfer from ubiquinol to cytochrome c. Contributes to the generation of a proton gradient across the mitochondrial membrane that is then used for ATP synthesis.</text>
</comment>
<comment type="cofactor">
    <cofactor evidence="2">
        <name>heme b</name>
        <dbReference type="ChEBI" id="CHEBI:60344"/>
    </cofactor>
    <text evidence="2">Binds 2 heme b groups non-covalently.</text>
</comment>
<comment type="subunit">
    <text evidence="2">The main subunits of complex b-c1 are: cytochrome b, cytochrome c1 and the Rieske protein.</text>
</comment>
<comment type="subcellular location">
    <subcellularLocation>
        <location evidence="3">Mitochondrion inner membrane</location>
        <topology evidence="3">Multi-pass membrane protein</topology>
    </subcellularLocation>
</comment>
<comment type="miscellaneous">
    <text evidence="1">Heme 1 (or BL or b562) is low-potential and absorbs at about 562 nm, and heme 2 (or BH or b566) is high-potential and absorbs at about 566 nm.</text>
</comment>
<comment type="similarity">
    <text evidence="4 5">Belongs to the cytochrome b family.</text>
</comment>
<comment type="caution">
    <text evidence="2">The full-length protein contains only eight transmembrane helices, not nine as predicted by bioinformatics tools.</text>
</comment>
<comment type="caution">
    <text evidence="6">An expected heme iron ligand His residue was not found at position 197 in this sequence.</text>
</comment>
<organism>
    <name type="scientific">Paracentrotus lividus</name>
    <name type="common">Common sea urchin</name>
    <dbReference type="NCBI Taxonomy" id="7656"/>
    <lineage>
        <taxon>Eukaryota</taxon>
        <taxon>Metazoa</taxon>
        <taxon>Echinodermata</taxon>
        <taxon>Eleutherozoa</taxon>
        <taxon>Echinozoa</taxon>
        <taxon>Echinoidea</taxon>
        <taxon>Euechinoidea</taxon>
        <taxon>Echinacea</taxon>
        <taxon>Camarodonta</taxon>
        <taxon>Echinidea</taxon>
        <taxon>Echinidae</taxon>
        <taxon>Paracentrotus</taxon>
    </lineage>
</organism>
<evidence type="ECO:0000250" key="1"/>
<evidence type="ECO:0000250" key="2">
    <source>
        <dbReference type="UniProtKB" id="P00157"/>
    </source>
</evidence>
<evidence type="ECO:0000250" key="3">
    <source>
        <dbReference type="UniProtKB" id="P00163"/>
    </source>
</evidence>
<evidence type="ECO:0000255" key="4">
    <source>
        <dbReference type="PROSITE-ProRule" id="PRU00967"/>
    </source>
</evidence>
<evidence type="ECO:0000255" key="5">
    <source>
        <dbReference type="PROSITE-ProRule" id="PRU00968"/>
    </source>
</evidence>
<evidence type="ECO:0000305" key="6"/>
<proteinExistence type="inferred from homology"/>